<accession>A1JP08</accession>
<organism>
    <name type="scientific">Yersinia enterocolitica serotype O:8 / biotype 1B (strain NCTC 13174 / 8081)</name>
    <dbReference type="NCBI Taxonomy" id="393305"/>
    <lineage>
        <taxon>Bacteria</taxon>
        <taxon>Pseudomonadati</taxon>
        <taxon>Pseudomonadota</taxon>
        <taxon>Gammaproteobacteria</taxon>
        <taxon>Enterobacterales</taxon>
        <taxon>Yersiniaceae</taxon>
        <taxon>Yersinia</taxon>
    </lineage>
</organism>
<keyword id="KW-0028">Amino-acid biosynthesis</keyword>
<keyword id="KW-0067">ATP-binding</keyword>
<keyword id="KW-0418">Kinase</keyword>
<keyword id="KW-0486">Methionine biosynthesis</keyword>
<keyword id="KW-0547">Nucleotide-binding</keyword>
<keyword id="KW-0808">Transferase</keyword>
<evidence type="ECO:0000255" key="1">
    <source>
        <dbReference type="HAMAP-Rule" id="MF_01683"/>
    </source>
</evidence>
<dbReference type="EC" id="2.7.1.100" evidence="1"/>
<dbReference type="EMBL" id="AM286415">
    <property type="protein sequence ID" value="CAL13260.1"/>
    <property type="molecule type" value="Genomic_DNA"/>
</dbReference>
<dbReference type="RefSeq" id="WP_011816942.1">
    <property type="nucleotide sequence ID" value="NC_008800.1"/>
</dbReference>
<dbReference type="RefSeq" id="YP_001007404.1">
    <property type="nucleotide sequence ID" value="NC_008800.1"/>
</dbReference>
<dbReference type="SMR" id="A1JP08"/>
<dbReference type="KEGG" id="yen:YE3228"/>
<dbReference type="PATRIC" id="fig|393305.7.peg.3432"/>
<dbReference type="eggNOG" id="COG4857">
    <property type="taxonomic scope" value="Bacteria"/>
</dbReference>
<dbReference type="HOGENOM" id="CLU_033681_0_0_6"/>
<dbReference type="OrthoDB" id="9777791at2"/>
<dbReference type="UniPathway" id="UPA00904">
    <property type="reaction ID" value="UER00872"/>
</dbReference>
<dbReference type="Proteomes" id="UP000000642">
    <property type="component" value="Chromosome"/>
</dbReference>
<dbReference type="GO" id="GO:0005524">
    <property type="term" value="F:ATP binding"/>
    <property type="evidence" value="ECO:0007669"/>
    <property type="project" value="UniProtKB-UniRule"/>
</dbReference>
<dbReference type="GO" id="GO:0046522">
    <property type="term" value="F:S-methyl-5-thioribose kinase activity"/>
    <property type="evidence" value="ECO:0007669"/>
    <property type="project" value="UniProtKB-UniRule"/>
</dbReference>
<dbReference type="GO" id="GO:0019509">
    <property type="term" value="P:L-methionine salvage from methylthioadenosine"/>
    <property type="evidence" value="ECO:0007669"/>
    <property type="project" value="UniProtKB-UniRule"/>
</dbReference>
<dbReference type="Gene3D" id="3.90.1200.10">
    <property type="match status" value="1"/>
</dbReference>
<dbReference type="Gene3D" id="3.30.200.20">
    <property type="entry name" value="Phosphorylase Kinase, domain 1"/>
    <property type="match status" value="1"/>
</dbReference>
<dbReference type="HAMAP" id="MF_01683">
    <property type="entry name" value="Salvage_MtnK"/>
    <property type="match status" value="1"/>
</dbReference>
<dbReference type="InterPro" id="IPR002575">
    <property type="entry name" value="Aminoglycoside_PTrfase"/>
</dbReference>
<dbReference type="InterPro" id="IPR011009">
    <property type="entry name" value="Kinase-like_dom_sf"/>
</dbReference>
<dbReference type="InterPro" id="IPR009212">
    <property type="entry name" value="Methylthioribose_kinase"/>
</dbReference>
<dbReference type="NCBIfam" id="TIGR01767">
    <property type="entry name" value="MTRK"/>
    <property type="match status" value="1"/>
</dbReference>
<dbReference type="PANTHER" id="PTHR34273">
    <property type="entry name" value="METHYLTHIORIBOSE KINASE"/>
    <property type="match status" value="1"/>
</dbReference>
<dbReference type="PANTHER" id="PTHR34273:SF2">
    <property type="entry name" value="METHYLTHIORIBOSE KINASE"/>
    <property type="match status" value="1"/>
</dbReference>
<dbReference type="Pfam" id="PF01636">
    <property type="entry name" value="APH"/>
    <property type="match status" value="1"/>
</dbReference>
<dbReference type="PIRSF" id="PIRSF031134">
    <property type="entry name" value="MTRK"/>
    <property type="match status" value="1"/>
</dbReference>
<dbReference type="SUPFAM" id="SSF56112">
    <property type="entry name" value="Protein kinase-like (PK-like)"/>
    <property type="match status" value="1"/>
</dbReference>
<sequence length="399" mass="44351">MSRYHTFTAADAVEYARQFGQIADPLALVTADEIGDGNLNLVFKIRDAAGMSRVIVKQALPYVRCVGESWPLTLDRARIEAETLLTHGQFCPQHTVNVLHHDAELAVMVQEDLSDHEIWRSELVKGKYYPQAAGQLAEYLAQTLFHTSDFYQSAQAKKAAVSRYTNPELCQITEDLFFTDPYIDHERNNFDPALLPEVLALRQDDALKLAVASLKHRFLSKAEALLHGDIHSGSIFVADGRLKAIDAEFGFYGPIGFDVGTALGNLLLNYCGLPGLAGPRDAAAGREQRLKDIHILWETFSHRFLALCEEKTQDSTLATAGYARLFLQQVWQDAVGYCGSELIRRTIGLAHVADLDSIADDEMRRACQRHALSLGRTLILAASRIDSIDDLIARIRQNG</sequence>
<protein>
    <recommendedName>
        <fullName evidence="1">Methylthioribose kinase</fullName>
        <shortName evidence="1">MTR kinase</shortName>
        <ecNumber evidence="1">2.7.1.100</ecNumber>
    </recommendedName>
</protein>
<comment type="function">
    <text evidence="1">Catalyzes the phosphorylation of methylthioribose into methylthioribose-1-phosphate.</text>
</comment>
<comment type="catalytic activity">
    <reaction evidence="1">
        <text>5-(methylsulfanyl)-D-ribose + ATP = 5-(methylsulfanyl)-alpha-D-ribose 1-phosphate + ADP + H(+)</text>
        <dbReference type="Rhea" id="RHEA:22312"/>
        <dbReference type="ChEBI" id="CHEBI:15378"/>
        <dbReference type="ChEBI" id="CHEBI:30616"/>
        <dbReference type="ChEBI" id="CHEBI:58533"/>
        <dbReference type="ChEBI" id="CHEBI:78440"/>
        <dbReference type="ChEBI" id="CHEBI:456216"/>
        <dbReference type="EC" id="2.7.1.100"/>
    </reaction>
</comment>
<comment type="pathway">
    <text evidence="1">Amino-acid biosynthesis; L-methionine biosynthesis via salvage pathway; S-methyl-5-thio-alpha-D-ribose 1-phosphate from S-methyl-5'-thioadenosine (hydrolase route): step 2/2.</text>
</comment>
<comment type="subunit">
    <text evidence="1">Homodimer.</text>
</comment>
<comment type="similarity">
    <text evidence="1">Belongs to the methylthioribose kinase family.</text>
</comment>
<proteinExistence type="inferred from homology"/>
<feature type="chain" id="PRO_0000357349" description="Methylthioribose kinase">
    <location>
        <begin position="1"/>
        <end position="399"/>
    </location>
</feature>
<feature type="binding site" evidence="1">
    <location>
        <position position="40"/>
    </location>
    <ligand>
        <name>ATP</name>
        <dbReference type="ChEBI" id="CHEBI:30616"/>
    </ligand>
</feature>
<feature type="binding site" evidence="1">
    <location>
        <position position="57"/>
    </location>
    <ligand>
        <name>ATP</name>
        <dbReference type="ChEBI" id="CHEBI:30616"/>
    </ligand>
</feature>
<feature type="binding site" evidence="1">
    <location>
        <begin position="111"/>
        <end position="113"/>
    </location>
    <ligand>
        <name>ATP</name>
        <dbReference type="ChEBI" id="CHEBI:30616"/>
    </ligand>
</feature>
<feature type="binding site" evidence="1">
    <location>
        <position position="229"/>
    </location>
    <ligand>
        <name>substrate</name>
    </ligand>
</feature>
<feature type="binding site" evidence="1">
    <location>
        <begin position="246"/>
        <end position="248"/>
    </location>
    <ligand>
        <name>ATP</name>
        <dbReference type="ChEBI" id="CHEBI:30616"/>
    </ligand>
</feature>
<feature type="binding site" evidence="1">
    <location>
        <position position="344"/>
    </location>
    <ligand>
        <name>substrate</name>
    </ligand>
</feature>
<reference key="1">
    <citation type="journal article" date="2006" name="PLoS Genet.">
        <title>The complete genome sequence and comparative genome analysis of the high pathogenicity Yersinia enterocolitica strain 8081.</title>
        <authorList>
            <person name="Thomson N.R."/>
            <person name="Howard S."/>
            <person name="Wren B.W."/>
            <person name="Holden M.T.G."/>
            <person name="Crossman L."/>
            <person name="Challis G.L."/>
            <person name="Churcher C."/>
            <person name="Mungall K."/>
            <person name="Brooks K."/>
            <person name="Chillingworth T."/>
            <person name="Feltwell T."/>
            <person name="Abdellah Z."/>
            <person name="Hauser H."/>
            <person name="Jagels K."/>
            <person name="Maddison M."/>
            <person name="Moule S."/>
            <person name="Sanders M."/>
            <person name="Whitehead S."/>
            <person name="Quail M.A."/>
            <person name="Dougan G."/>
            <person name="Parkhill J."/>
            <person name="Prentice M.B."/>
        </authorList>
    </citation>
    <scope>NUCLEOTIDE SEQUENCE [LARGE SCALE GENOMIC DNA]</scope>
    <source>
        <strain>NCTC 13174 / 8081</strain>
    </source>
</reference>
<gene>
    <name evidence="1" type="primary">mtnK</name>
    <name type="ordered locus">YE3228</name>
</gene>
<name>MTNK_YERE8</name>